<dbReference type="EC" id="6.3.2.8" evidence="1"/>
<dbReference type="EMBL" id="FM204883">
    <property type="protein sequence ID" value="CAW95064.1"/>
    <property type="molecule type" value="Genomic_DNA"/>
</dbReference>
<dbReference type="RefSeq" id="WP_012680064.1">
    <property type="nucleotide sequence ID" value="NC_012471.1"/>
</dbReference>
<dbReference type="SMR" id="C0M809"/>
<dbReference type="KEGG" id="seu:SEQ_1882"/>
<dbReference type="HOGENOM" id="CLU_028104_1_0_9"/>
<dbReference type="OrthoDB" id="9804126at2"/>
<dbReference type="UniPathway" id="UPA00219"/>
<dbReference type="Proteomes" id="UP000001365">
    <property type="component" value="Chromosome"/>
</dbReference>
<dbReference type="GO" id="GO:0005737">
    <property type="term" value="C:cytoplasm"/>
    <property type="evidence" value="ECO:0007669"/>
    <property type="project" value="UniProtKB-SubCell"/>
</dbReference>
<dbReference type="GO" id="GO:0005524">
    <property type="term" value="F:ATP binding"/>
    <property type="evidence" value="ECO:0007669"/>
    <property type="project" value="UniProtKB-UniRule"/>
</dbReference>
<dbReference type="GO" id="GO:0008763">
    <property type="term" value="F:UDP-N-acetylmuramate-L-alanine ligase activity"/>
    <property type="evidence" value="ECO:0007669"/>
    <property type="project" value="UniProtKB-UniRule"/>
</dbReference>
<dbReference type="GO" id="GO:0051301">
    <property type="term" value="P:cell division"/>
    <property type="evidence" value="ECO:0007669"/>
    <property type="project" value="UniProtKB-KW"/>
</dbReference>
<dbReference type="GO" id="GO:0071555">
    <property type="term" value="P:cell wall organization"/>
    <property type="evidence" value="ECO:0007669"/>
    <property type="project" value="UniProtKB-KW"/>
</dbReference>
<dbReference type="GO" id="GO:0009252">
    <property type="term" value="P:peptidoglycan biosynthetic process"/>
    <property type="evidence" value="ECO:0007669"/>
    <property type="project" value="UniProtKB-UniRule"/>
</dbReference>
<dbReference type="GO" id="GO:0008360">
    <property type="term" value="P:regulation of cell shape"/>
    <property type="evidence" value="ECO:0007669"/>
    <property type="project" value="UniProtKB-KW"/>
</dbReference>
<dbReference type="Gene3D" id="3.90.190.20">
    <property type="entry name" value="Mur ligase, C-terminal domain"/>
    <property type="match status" value="1"/>
</dbReference>
<dbReference type="Gene3D" id="3.40.1190.10">
    <property type="entry name" value="Mur-like, catalytic domain"/>
    <property type="match status" value="1"/>
</dbReference>
<dbReference type="Gene3D" id="3.40.50.720">
    <property type="entry name" value="NAD(P)-binding Rossmann-like Domain"/>
    <property type="match status" value="1"/>
</dbReference>
<dbReference type="HAMAP" id="MF_00046">
    <property type="entry name" value="MurC"/>
    <property type="match status" value="1"/>
</dbReference>
<dbReference type="InterPro" id="IPR036565">
    <property type="entry name" value="Mur-like_cat_sf"/>
</dbReference>
<dbReference type="InterPro" id="IPR004101">
    <property type="entry name" value="Mur_ligase_C"/>
</dbReference>
<dbReference type="InterPro" id="IPR036615">
    <property type="entry name" value="Mur_ligase_C_dom_sf"/>
</dbReference>
<dbReference type="InterPro" id="IPR013221">
    <property type="entry name" value="Mur_ligase_cen"/>
</dbReference>
<dbReference type="InterPro" id="IPR000713">
    <property type="entry name" value="Mur_ligase_N"/>
</dbReference>
<dbReference type="InterPro" id="IPR050061">
    <property type="entry name" value="MurCDEF_pg_biosynth"/>
</dbReference>
<dbReference type="InterPro" id="IPR005758">
    <property type="entry name" value="UDP-N-AcMur_Ala_ligase_MurC"/>
</dbReference>
<dbReference type="NCBIfam" id="TIGR01082">
    <property type="entry name" value="murC"/>
    <property type="match status" value="1"/>
</dbReference>
<dbReference type="PANTHER" id="PTHR43445:SF3">
    <property type="entry name" value="UDP-N-ACETYLMURAMATE--L-ALANINE LIGASE"/>
    <property type="match status" value="1"/>
</dbReference>
<dbReference type="PANTHER" id="PTHR43445">
    <property type="entry name" value="UDP-N-ACETYLMURAMATE--L-ALANINE LIGASE-RELATED"/>
    <property type="match status" value="1"/>
</dbReference>
<dbReference type="Pfam" id="PF01225">
    <property type="entry name" value="Mur_ligase"/>
    <property type="match status" value="1"/>
</dbReference>
<dbReference type="Pfam" id="PF02875">
    <property type="entry name" value="Mur_ligase_C"/>
    <property type="match status" value="1"/>
</dbReference>
<dbReference type="Pfam" id="PF08245">
    <property type="entry name" value="Mur_ligase_M"/>
    <property type="match status" value="1"/>
</dbReference>
<dbReference type="SUPFAM" id="SSF51984">
    <property type="entry name" value="MurCD N-terminal domain"/>
    <property type="match status" value="1"/>
</dbReference>
<dbReference type="SUPFAM" id="SSF53623">
    <property type="entry name" value="MurD-like peptide ligases, catalytic domain"/>
    <property type="match status" value="1"/>
</dbReference>
<dbReference type="SUPFAM" id="SSF53244">
    <property type="entry name" value="MurD-like peptide ligases, peptide-binding domain"/>
    <property type="match status" value="1"/>
</dbReference>
<feature type="chain" id="PRO_1000192112" description="UDP-N-acetylmuramate--L-alanine ligase">
    <location>
        <begin position="1"/>
        <end position="443"/>
    </location>
</feature>
<feature type="binding site" evidence="1">
    <location>
        <begin position="110"/>
        <end position="116"/>
    </location>
    <ligand>
        <name>ATP</name>
        <dbReference type="ChEBI" id="CHEBI:30616"/>
    </ligand>
</feature>
<evidence type="ECO:0000255" key="1">
    <source>
        <dbReference type="HAMAP-Rule" id="MF_00046"/>
    </source>
</evidence>
<protein>
    <recommendedName>
        <fullName evidence="1">UDP-N-acetylmuramate--L-alanine ligase</fullName>
        <ecNumber evidence="1">6.3.2.8</ecNumber>
    </recommendedName>
    <alternativeName>
        <fullName evidence="1">UDP-N-acetylmuramoyl-L-alanine synthetase</fullName>
    </alternativeName>
</protein>
<proteinExistence type="inferred from homology"/>
<organism>
    <name type="scientific">Streptococcus equi subsp. equi (strain 4047)</name>
    <dbReference type="NCBI Taxonomy" id="553482"/>
    <lineage>
        <taxon>Bacteria</taxon>
        <taxon>Bacillati</taxon>
        <taxon>Bacillota</taxon>
        <taxon>Bacilli</taxon>
        <taxon>Lactobacillales</taxon>
        <taxon>Streptococcaceae</taxon>
        <taxon>Streptococcus</taxon>
    </lineage>
</organism>
<sequence>MSKTYHFIGIKGSGMSALALLLHQMGHKVQGSDVEKYYFTQRGLEQAGITILPFSEDNISPDMELIAGNAFREDNNSEVAYAMRHQLPFKRYHEFLGEFMKQFTSLGVAGAHGKTSTTGLLSHVLKHMTATSYLIGDGTGHGAADARYFVFESDEYERHFMPYHPEYSIITNIDFDHPDYFTGLDDVFNAFNDYAKQVKKALFVYGEDEELRKISSPAPIYYYGFEDTDDFVAFDITRTTNGSDFKVKHKGHAIGQFHVPAYGRHNILNATAVIANLFIAGFDMKLVAEHLKSFSGVKRRFTEKVINDTIIIDDFAHHPTEIIATLDAARQKYPNKEIIAIFQPHTFTRTIALLDDFAHALNEADSVYLAPIYGSAREVDKGDVKVEDLAARVERPAKVISVDNVSPLLDHDNAVYVFMGAGDIQLYERSFEELLANLTKNNQ</sequence>
<gene>
    <name evidence="1" type="primary">murC</name>
    <name type="ordered locus">SEQ_1882</name>
</gene>
<keyword id="KW-0067">ATP-binding</keyword>
<keyword id="KW-0131">Cell cycle</keyword>
<keyword id="KW-0132">Cell division</keyword>
<keyword id="KW-0133">Cell shape</keyword>
<keyword id="KW-0961">Cell wall biogenesis/degradation</keyword>
<keyword id="KW-0963">Cytoplasm</keyword>
<keyword id="KW-0436">Ligase</keyword>
<keyword id="KW-0547">Nucleotide-binding</keyword>
<keyword id="KW-0573">Peptidoglycan synthesis</keyword>
<accession>C0M809</accession>
<reference key="1">
    <citation type="journal article" date="2009" name="PLoS Pathog.">
        <title>Genomic evidence for the evolution of Streptococcus equi: host restriction, increased virulence, and genetic exchange with human pathogens.</title>
        <authorList>
            <person name="Holden M.T.G."/>
            <person name="Heather Z."/>
            <person name="Paillot R."/>
            <person name="Steward K.F."/>
            <person name="Webb K."/>
            <person name="Ainslie F."/>
            <person name="Jourdan T."/>
            <person name="Bason N.C."/>
            <person name="Holroyd N.E."/>
            <person name="Mungall K."/>
            <person name="Quail M.A."/>
            <person name="Sanders M."/>
            <person name="Simmonds M."/>
            <person name="Willey D."/>
            <person name="Brooks K."/>
            <person name="Aanensen D.M."/>
            <person name="Spratt B.G."/>
            <person name="Jolley K.A."/>
            <person name="Maiden M.C.J."/>
            <person name="Kehoe M."/>
            <person name="Chanter N."/>
            <person name="Bentley S.D."/>
            <person name="Robinson C."/>
            <person name="Maskell D.J."/>
            <person name="Parkhill J."/>
            <person name="Waller A.S."/>
        </authorList>
    </citation>
    <scope>NUCLEOTIDE SEQUENCE [LARGE SCALE GENOMIC DNA]</scope>
    <source>
        <strain>4047</strain>
    </source>
</reference>
<comment type="function">
    <text evidence="1">Cell wall formation.</text>
</comment>
<comment type="catalytic activity">
    <reaction evidence="1">
        <text>UDP-N-acetyl-alpha-D-muramate + L-alanine + ATP = UDP-N-acetyl-alpha-D-muramoyl-L-alanine + ADP + phosphate + H(+)</text>
        <dbReference type="Rhea" id="RHEA:23372"/>
        <dbReference type="ChEBI" id="CHEBI:15378"/>
        <dbReference type="ChEBI" id="CHEBI:30616"/>
        <dbReference type="ChEBI" id="CHEBI:43474"/>
        <dbReference type="ChEBI" id="CHEBI:57972"/>
        <dbReference type="ChEBI" id="CHEBI:70757"/>
        <dbReference type="ChEBI" id="CHEBI:83898"/>
        <dbReference type="ChEBI" id="CHEBI:456216"/>
        <dbReference type="EC" id="6.3.2.8"/>
    </reaction>
</comment>
<comment type="pathway">
    <text evidence="1">Cell wall biogenesis; peptidoglycan biosynthesis.</text>
</comment>
<comment type="subcellular location">
    <subcellularLocation>
        <location evidence="1">Cytoplasm</location>
    </subcellularLocation>
</comment>
<comment type="similarity">
    <text evidence="1">Belongs to the MurCDEF family.</text>
</comment>
<name>MURC_STRE4</name>